<comment type="function">
    <text evidence="1">Binds directly to 23S ribosomal RNA and is necessary for the in vitro assembly process of the 50S ribosomal subunit. It is not involved in the protein synthesizing functions of that subunit.</text>
</comment>
<comment type="similarity">
    <text evidence="1">Belongs to the bacterial ribosomal protein bL20 family.</text>
</comment>
<organism>
    <name type="scientific">Escherichia coli (strain 55989 / EAEC)</name>
    <dbReference type="NCBI Taxonomy" id="585055"/>
    <lineage>
        <taxon>Bacteria</taxon>
        <taxon>Pseudomonadati</taxon>
        <taxon>Pseudomonadota</taxon>
        <taxon>Gammaproteobacteria</taxon>
        <taxon>Enterobacterales</taxon>
        <taxon>Enterobacteriaceae</taxon>
        <taxon>Escherichia</taxon>
    </lineage>
</organism>
<sequence length="118" mass="13497">MARVKRGVIARARHKKILKQAKGYYGARSRVYRVAFQAVIKAGQYAYRDRRQRKRQFRQLWIARINAAARQNGISYSKFINGLKKASVEIDRKILADIAVFDKVAFTALVEKAKAALA</sequence>
<keyword id="KW-1185">Reference proteome</keyword>
<keyword id="KW-0687">Ribonucleoprotein</keyword>
<keyword id="KW-0689">Ribosomal protein</keyword>
<keyword id="KW-0694">RNA-binding</keyword>
<keyword id="KW-0699">rRNA-binding</keyword>
<reference key="1">
    <citation type="journal article" date="2009" name="PLoS Genet.">
        <title>Organised genome dynamics in the Escherichia coli species results in highly diverse adaptive paths.</title>
        <authorList>
            <person name="Touchon M."/>
            <person name="Hoede C."/>
            <person name="Tenaillon O."/>
            <person name="Barbe V."/>
            <person name="Baeriswyl S."/>
            <person name="Bidet P."/>
            <person name="Bingen E."/>
            <person name="Bonacorsi S."/>
            <person name="Bouchier C."/>
            <person name="Bouvet O."/>
            <person name="Calteau A."/>
            <person name="Chiapello H."/>
            <person name="Clermont O."/>
            <person name="Cruveiller S."/>
            <person name="Danchin A."/>
            <person name="Diard M."/>
            <person name="Dossat C."/>
            <person name="Karoui M.E."/>
            <person name="Frapy E."/>
            <person name="Garry L."/>
            <person name="Ghigo J.M."/>
            <person name="Gilles A.M."/>
            <person name="Johnson J."/>
            <person name="Le Bouguenec C."/>
            <person name="Lescat M."/>
            <person name="Mangenot S."/>
            <person name="Martinez-Jehanne V."/>
            <person name="Matic I."/>
            <person name="Nassif X."/>
            <person name="Oztas S."/>
            <person name="Petit M.A."/>
            <person name="Pichon C."/>
            <person name="Rouy Z."/>
            <person name="Ruf C.S."/>
            <person name="Schneider D."/>
            <person name="Tourret J."/>
            <person name="Vacherie B."/>
            <person name="Vallenet D."/>
            <person name="Medigue C."/>
            <person name="Rocha E.P.C."/>
            <person name="Denamur E."/>
        </authorList>
    </citation>
    <scope>NUCLEOTIDE SEQUENCE [LARGE SCALE GENOMIC DNA]</scope>
    <source>
        <strain>55989 / EAEC</strain>
    </source>
</reference>
<proteinExistence type="inferred from homology"/>
<feature type="chain" id="PRO_1000193959" description="Large ribosomal subunit protein bL20">
    <location>
        <begin position="1"/>
        <end position="118"/>
    </location>
</feature>
<accession>B7L6I9</accession>
<dbReference type="EMBL" id="CU928145">
    <property type="protein sequence ID" value="CAU97742.1"/>
    <property type="molecule type" value="Genomic_DNA"/>
</dbReference>
<dbReference type="RefSeq" id="WP_000124850.1">
    <property type="nucleotide sequence ID" value="NZ_CP028304.1"/>
</dbReference>
<dbReference type="SMR" id="B7L6I9"/>
<dbReference type="GeneID" id="98388757"/>
<dbReference type="KEGG" id="eck:EC55989_1883"/>
<dbReference type="HOGENOM" id="CLU_123265_0_1_6"/>
<dbReference type="Proteomes" id="UP000000746">
    <property type="component" value="Chromosome"/>
</dbReference>
<dbReference type="GO" id="GO:1990904">
    <property type="term" value="C:ribonucleoprotein complex"/>
    <property type="evidence" value="ECO:0007669"/>
    <property type="project" value="UniProtKB-KW"/>
</dbReference>
<dbReference type="GO" id="GO:0005840">
    <property type="term" value="C:ribosome"/>
    <property type="evidence" value="ECO:0007669"/>
    <property type="project" value="UniProtKB-KW"/>
</dbReference>
<dbReference type="GO" id="GO:0019843">
    <property type="term" value="F:rRNA binding"/>
    <property type="evidence" value="ECO:0007669"/>
    <property type="project" value="UniProtKB-UniRule"/>
</dbReference>
<dbReference type="GO" id="GO:0003735">
    <property type="term" value="F:structural constituent of ribosome"/>
    <property type="evidence" value="ECO:0007669"/>
    <property type="project" value="InterPro"/>
</dbReference>
<dbReference type="GO" id="GO:0000027">
    <property type="term" value="P:ribosomal large subunit assembly"/>
    <property type="evidence" value="ECO:0007669"/>
    <property type="project" value="UniProtKB-UniRule"/>
</dbReference>
<dbReference type="GO" id="GO:0006412">
    <property type="term" value="P:translation"/>
    <property type="evidence" value="ECO:0007669"/>
    <property type="project" value="InterPro"/>
</dbReference>
<dbReference type="CDD" id="cd07026">
    <property type="entry name" value="Ribosomal_L20"/>
    <property type="match status" value="1"/>
</dbReference>
<dbReference type="FunFam" id="1.10.1900.20:FF:000001">
    <property type="entry name" value="50S ribosomal protein L20"/>
    <property type="match status" value="1"/>
</dbReference>
<dbReference type="Gene3D" id="6.10.160.10">
    <property type="match status" value="1"/>
</dbReference>
<dbReference type="Gene3D" id="1.10.1900.20">
    <property type="entry name" value="Ribosomal protein L20"/>
    <property type="match status" value="1"/>
</dbReference>
<dbReference type="HAMAP" id="MF_00382">
    <property type="entry name" value="Ribosomal_bL20"/>
    <property type="match status" value="1"/>
</dbReference>
<dbReference type="InterPro" id="IPR005813">
    <property type="entry name" value="Ribosomal_bL20"/>
</dbReference>
<dbReference type="InterPro" id="IPR049946">
    <property type="entry name" value="RIBOSOMAL_L20_CS"/>
</dbReference>
<dbReference type="InterPro" id="IPR035566">
    <property type="entry name" value="Ribosomal_protein_bL20_C"/>
</dbReference>
<dbReference type="NCBIfam" id="TIGR01032">
    <property type="entry name" value="rplT_bact"/>
    <property type="match status" value="1"/>
</dbReference>
<dbReference type="PANTHER" id="PTHR10986">
    <property type="entry name" value="39S RIBOSOMAL PROTEIN L20"/>
    <property type="match status" value="1"/>
</dbReference>
<dbReference type="Pfam" id="PF00453">
    <property type="entry name" value="Ribosomal_L20"/>
    <property type="match status" value="1"/>
</dbReference>
<dbReference type="PRINTS" id="PR00062">
    <property type="entry name" value="RIBOSOMALL20"/>
</dbReference>
<dbReference type="SUPFAM" id="SSF74731">
    <property type="entry name" value="Ribosomal protein L20"/>
    <property type="match status" value="1"/>
</dbReference>
<dbReference type="PROSITE" id="PS00937">
    <property type="entry name" value="RIBOSOMAL_L20"/>
    <property type="match status" value="1"/>
</dbReference>
<gene>
    <name evidence="1" type="primary">rplT</name>
    <name type="ordered locus">EC55989_1883</name>
</gene>
<protein>
    <recommendedName>
        <fullName evidence="1">Large ribosomal subunit protein bL20</fullName>
    </recommendedName>
    <alternativeName>
        <fullName evidence="2">50S ribosomal protein L20</fullName>
    </alternativeName>
</protein>
<name>RL20_ECO55</name>
<evidence type="ECO:0000255" key="1">
    <source>
        <dbReference type="HAMAP-Rule" id="MF_00382"/>
    </source>
</evidence>
<evidence type="ECO:0000305" key="2"/>